<proteinExistence type="evidence at transcript level"/>
<protein>
    <recommendedName>
        <fullName evidence="1">CRISPR-associated endonuclease Cas1 1</fullName>
        <ecNumber evidence="1">3.1.-.-</ecNumber>
    </recommendedName>
</protein>
<reference key="1">
    <citation type="journal article" date="2007" name="Genome Biol.">
        <title>Comparison of Francisella tularensis genomes reveals evolutionary events associated with the emergence of human pathogenic strains.</title>
        <authorList>
            <person name="Rohmer L."/>
            <person name="Fong C."/>
            <person name="Abmayr S."/>
            <person name="Wasnick M."/>
            <person name="Larson Freeman T.J."/>
            <person name="Radey M."/>
            <person name="Guina T."/>
            <person name="Svensson K."/>
            <person name="Hayden H.S."/>
            <person name="Jacobs M."/>
            <person name="Gallagher L.A."/>
            <person name="Manoil C."/>
            <person name="Ernst R.K."/>
            <person name="Drees B."/>
            <person name="Buckley D."/>
            <person name="Haugen E."/>
            <person name="Bovee D."/>
            <person name="Zhou Y."/>
            <person name="Chang J."/>
            <person name="Levy R."/>
            <person name="Lim R."/>
            <person name="Gillett W."/>
            <person name="Guenthener D."/>
            <person name="Kang A."/>
            <person name="Shaffer S.A."/>
            <person name="Taylor G."/>
            <person name="Chen J."/>
            <person name="Gallis B."/>
            <person name="D'Argenio D.A."/>
            <person name="Forsman M."/>
            <person name="Olson M.V."/>
            <person name="Goodlett D.R."/>
            <person name="Kaul R."/>
            <person name="Miller S.I."/>
            <person name="Brittnacher M.J."/>
        </authorList>
    </citation>
    <scope>NUCLEOTIDE SEQUENCE [LARGE SCALE GENOMIC DNA]</scope>
    <source>
        <strain>U112</strain>
    </source>
</reference>
<reference key="2">
    <citation type="journal article" date="2013" name="Nature">
        <title>A CRISPR/Cas system mediates bacterial innate immune evasion and virulence.</title>
        <authorList>
            <person name="Sampson T.R."/>
            <person name="Saroj S.D."/>
            <person name="Llewellyn A.C."/>
            <person name="Tzeng Y.L."/>
            <person name="Weiss D.S."/>
        </authorList>
    </citation>
    <scope>INDUCTION</scope>
    <scope>DISRUPTION PHENOTYPE</scope>
    <source>
        <strain>U112</strain>
    </source>
</reference>
<reference key="3">
    <citation type="journal article" date="2013" name="Nature">
        <authorList>
            <person name="Sampson T.R."/>
            <person name="Saroj S.D."/>
            <person name="Llewellyn A.C."/>
            <person name="Tzeng Y.L."/>
            <person name="Weiss D.S."/>
        </authorList>
    </citation>
    <scope>ERRATUM OF PUBMED:23584588</scope>
</reference>
<evidence type="ECO:0000255" key="1">
    <source>
        <dbReference type="HAMAP-Rule" id="MF_01470"/>
    </source>
</evidence>
<evidence type="ECO:0000269" key="2">
    <source>
    </source>
</evidence>
<evidence type="ECO:0000305" key="3">
    <source>
    </source>
</evidence>
<feature type="chain" id="PRO_0000436104" description="CRISPR-associated endonuclease Cas1 1">
    <location>
        <begin position="1"/>
        <end position="318"/>
    </location>
</feature>
<feature type="binding site" evidence="1">
    <location>
        <position position="157"/>
    </location>
    <ligand>
        <name>Mn(2+)</name>
        <dbReference type="ChEBI" id="CHEBI:29035"/>
    </ligand>
</feature>
<feature type="binding site" evidence="1">
    <location>
        <position position="222"/>
    </location>
    <ligand>
        <name>Mn(2+)</name>
        <dbReference type="ChEBI" id="CHEBI:29035"/>
    </ligand>
</feature>
<feature type="binding site" evidence="1">
    <location>
        <position position="237"/>
    </location>
    <ligand>
        <name>Mn(2+)</name>
        <dbReference type="ChEBI" id="CHEBI:29035"/>
    </ligand>
</feature>
<name>CAS1A_FRATN</name>
<accession>A0Q5Y4</accession>
<dbReference type="EC" id="3.1.-.-" evidence="1"/>
<dbReference type="EMBL" id="CP000439">
    <property type="protein sequence ID" value="ABK89649.1"/>
    <property type="molecule type" value="Genomic_DNA"/>
</dbReference>
<dbReference type="RefSeq" id="WP_003033605.1">
    <property type="nucleotide sequence ID" value="NC_008601.1"/>
</dbReference>
<dbReference type="SMR" id="A0Q5Y4"/>
<dbReference type="KEGG" id="ftn:FTN_0758"/>
<dbReference type="KEGG" id="ftx:AW25_1263"/>
<dbReference type="BioCyc" id="FTUL401614:G1G75-790-MONOMER"/>
<dbReference type="Proteomes" id="UP000000762">
    <property type="component" value="Chromosome"/>
</dbReference>
<dbReference type="GO" id="GO:0003677">
    <property type="term" value="F:DNA binding"/>
    <property type="evidence" value="ECO:0007669"/>
    <property type="project" value="UniProtKB-KW"/>
</dbReference>
<dbReference type="GO" id="GO:0004520">
    <property type="term" value="F:DNA endonuclease activity"/>
    <property type="evidence" value="ECO:0007669"/>
    <property type="project" value="InterPro"/>
</dbReference>
<dbReference type="GO" id="GO:0046872">
    <property type="term" value="F:metal ion binding"/>
    <property type="evidence" value="ECO:0007669"/>
    <property type="project" value="UniProtKB-UniRule"/>
</dbReference>
<dbReference type="GO" id="GO:0051607">
    <property type="term" value="P:defense response to virus"/>
    <property type="evidence" value="ECO:0007669"/>
    <property type="project" value="UniProtKB-UniRule"/>
</dbReference>
<dbReference type="GO" id="GO:0043571">
    <property type="term" value="P:maintenance of CRISPR repeat elements"/>
    <property type="evidence" value="ECO:0007669"/>
    <property type="project" value="UniProtKB-UniRule"/>
</dbReference>
<dbReference type="CDD" id="cd09634">
    <property type="entry name" value="Cas1_I-II-III"/>
    <property type="match status" value="1"/>
</dbReference>
<dbReference type="Gene3D" id="1.20.120.920">
    <property type="entry name" value="CRISPR-associated endonuclease Cas1, C-terminal domain"/>
    <property type="match status" value="1"/>
</dbReference>
<dbReference type="Gene3D" id="3.100.10.20">
    <property type="entry name" value="CRISPR-associated endonuclease Cas1, N-terminal domain"/>
    <property type="match status" value="1"/>
</dbReference>
<dbReference type="HAMAP" id="MF_01470">
    <property type="entry name" value="Cas1"/>
    <property type="match status" value="1"/>
</dbReference>
<dbReference type="InterPro" id="IPR050646">
    <property type="entry name" value="Cas1"/>
</dbReference>
<dbReference type="InterPro" id="IPR002729">
    <property type="entry name" value="CRISPR-assoc_Cas1"/>
</dbReference>
<dbReference type="InterPro" id="IPR042206">
    <property type="entry name" value="CRISPR-assoc_Cas1_C"/>
</dbReference>
<dbReference type="InterPro" id="IPR042211">
    <property type="entry name" value="CRISPR-assoc_Cas1_N"/>
</dbReference>
<dbReference type="InterPro" id="IPR019855">
    <property type="entry name" value="CRISPR-assoc_Cas1_NMENI"/>
</dbReference>
<dbReference type="NCBIfam" id="TIGR00287">
    <property type="entry name" value="cas1"/>
    <property type="match status" value="1"/>
</dbReference>
<dbReference type="NCBIfam" id="TIGR03639">
    <property type="entry name" value="cas1_NMENI"/>
    <property type="match status" value="1"/>
</dbReference>
<dbReference type="PANTHER" id="PTHR34353">
    <property type="entry name" value="CRISPR-ASSOCIATED ENDONUCLEASE CAS1 1"/>
    <property type="match status" value="1"/>
</dbReference>
<dbReference type="PANTHER" id="PTHR34353:SF2">
    <property type="entry name" value="CRISPR-ASSOCIATED ENDONUCLEASE CAS1 1"/>
    <property type="match status" value="1"/>
</dbReference>
<dbReference type="Pfam" id="PF01867">
    <property type="entry name" value="Cas_Cas1"/>
    <property type="match status" value="1"/>
</dbReference>
<comment type="function">
    <text evidence="1">CRISPR (clustered regularly interspaced short palindromic repeat), is an adaptive immune system that provides protection against mobile genetic elements (viruses, transposable elements and conjugative plasmids). CRISPR clusters contain spacers, sequences complementary to antecedent mobile elements, and target invading nucleic acids. CRISPR clusters are transcribed and processed into CRISPR RNA (crRNA). Acts as a dsDNA endonuclease. Involved in the integration of spacer DNA into the CRISPR cassette.</text>
</comment>
<comment type="cofactor">
    <cofactor evidence="1">
        <name>Mg(2+)</name>
        <dbReference type="ChEBI" id="CHEBI:18420"/>
    </cofactor>
    <cofactor evidence="1">
        <name>Mn(2+)</name>
        <dbReference type="ChEBI" id="CHEBI:29035"/>
    </cofactor>
</comment>
<comment type="subunit">
    <text evidence="1">Homodimer, forms a heterotetramer with a Cas2 homodimer.</text>
</comment>
<comment type="induction">
    <text evidence="2">In culture expression is high during early log phase (1 hour), decreases and then rises again in late stationary phase (16 hours). During infection of mouse bone marrow-derived macrophages (BMDM) expression is maximal after 1 hour, when the bacteria is expected to be in the phagosome.</text>
</comment>
<comment type="disruption phenotype">
    <text evidence="2">No effect on expression of bacterial lipoprotein FTN_1103. Bacteria are as virulent in mice as wild-type bacteria.</text>
</comment>
<comment type="miscellaneous">
    <text evidence="3">Part of a type II CRISPR-Cas system.</text>
</comment>
<comment type="similarity">
    <text evidence="1">Belongs to the CRISPR-associated endonuclease Cas1 family.</text>
</comment>
<sequence>MKHLIISEYGIYLGLESGRLVVKNKDDKKYFPLNRLATLSIAKKGVSFSSDLVEQFSLRGIKLFFLDFRGVAHSMLVGANQHAVVQARINQYRYIDRNALTLSIKLIAAKIKNQRATLNYFNKHHKSINLLNAIEELKRVAQLIKNAKTLNDVLGYEGYAANIYFSSLAKDKFLSASFANREGRGSQEIANSMLNFGYAILSSYILNAITNAGLEPYLGFLHQKRPGKMSLVLDLMEEYRAWVVDRVVIKLREQYKNKQYIDTKLKSILISEIQATIAKKYIYNGKKLKLEHIIQRQVYRLSGEFAGEHNYKPYIFKW</sequence>
<organism>
    <name type="scientific">Francisella tularensis subsp. novicida (strain U112)</name>
    <dbReference type="NCBI Taxonomy" id="401614"/>
    <lineage>
        <taxon>Bacteria</taxon>
        <taxon>Pseudomonadati</taxon>
        <taxon>Pseudomonadota</taxon>
        <taxon>Gammaproteobacteria</taxon>
        <taxon>Thiotrichales</taxon>
        <taxon>Francisellaceae</taxon>
        <taxon>Francisella</taxon>
    </lineage>
</organism>
<gene>
    <name evidence="1" type="primary">cas1-1</name>
    <name type="ordered locus">FTN_0758</name>
</gene>
<keyword id="KW-0051">Antiviral defense</keyword>
<keyword id="KW-0238">DNA-binding</keyword>
<keyword id="KW-0255">Endonuclease</keyword>
<keyword id="KW-0378">Hydrolase</keyword>
<keyword id="KW-0460">Magnesium</keyword>
<keyword id="KW-0464">Manganese</keyword>
<keyword id="KW-0479">Metal-binding</keyword>
<keyword id="KW-0540">Nuclease</keyword>